<dbReference type="EMBL" id="U00096">
    <property type="protein sequence ID" value="AAC74262.1"/>
    <property type="molecule type" value="Genomic_DNA"/>
</dbReference>
<dbReference type="EMBL" id="AP009048">
    <property type="protein sequence ID" value="BAA36012.1"/>
    <property type="molecule type" value="Genomic_DNA"/>
</dbReference>
<dbReference type="PIR" id="G64863">
    <property type="entry name" value="G64863"/>
</dbReference>
<dbReference type="RefSeq" id="NP_415696.1">
    <property type="nucleotide sequence ID" value="NC_000913.3"/>
</dbReference>
<dbReference type="RefSeq" id="WP_000695215.1">
    <property type="nucleotide sequence ID" value="NZ_SSZK01000010.1"/>
</dbReference>
<dbReference type="PDB" id="4DXZ">
    <property type="method" value="X-ray"/>
    <property type="resolution" value="1.25 A"/>
    <property type="chains" value="A=23-133"/>
</dbReference>
<dbReference type="PDB" id="4DY3">
    <property type="method" value="X-ray"/>
    <property type="resolution" value="1.80 A"/>
    <property type="chains" value="A/B=23-133"/>
</dbReference>
<dbReference type="PDB" id="4G9S">
    <property type="method" value="X-ray"/>
    <property type="resolution" value="0.95 A"/>
    <property type="chains" value="B=23-133"/>
</dbReference>
<dbReference type="PDBsum" id="4DXZ"/>
<dbReference type="PDBsum" id="4DY3"/>
<dbReference type="PDBsum" id="4G9S"/>
<dbReference type="SMR" id="P76002"/>
<dbReference type="BioGRID" id="4260099">
    <property type="interactions" value="14"/>
</dbReference>
<dbReference type="FunCoup" id="P76002">
    <property type="interactions" value="88"/>
</dbReference>
<dbReference type="IntAct" id="P76002">
    <property type="interactions" value="1"/>
</dbReference>
<dbReference type="STRING" id="511145.b1178"/>
<dbReference type="jPOST" id="P76002"/>
<dbReference type="PaxDb" id="511145-b1178"/>
<dbReference type="EnsemblBacteria" id="AAC74262">
    <property type="protein sequence ID" value="AAC74262"/>
    <property type="gene ID" value="b1178"/>
</dbReference>
<dbReference type="GeneID" id="946963"/>
<dbReference type="KEGG" id="ecj:JW1167"/>
<dbReference type="KEGG" id="eco:b1178"/>
<dbReference type="KEGG" id="ecoc:C3026_06940"/>
<dbReference type="PATRIC" id="fig|511145.12.peg.1222"/>
<dbReference type="EchoBASE" id="EB3651"/>
<dbReference type="eggNOG" id="ENOG5032ZD3">
    <property type="taxonomic scope" value="Bacteria"/>
</dbReference>
<dbReference type="HOGENOM" id="CLU_129252_0_0_6"/>
<dbReference type="InParanoid" id="P76002"/>
<dbReference type="OMA" id="WMSINIK"/>
<dbReference type="OrthoDB" id="8682638at2"/>
<dbReference type="PhylomeDB" id="P76002"/>
<dbReference type="BioCyc" id="EcoCyc:G6615-MONOMER"/>
<dbReference type="EvolutionaryTrace" id="P76002"/>
<dbReference type="PHI-base" id="PHI:2648"/>
<dbReference type="PRO" id="PR:P76002"/>
<dbReference type="Proteomes" id="UP000000625">
    <property type="component" value="Chromosome"/>
</dbReference>
<dbReference type="GO" id="GO:0030288">
    <property type="term" value="C:outer membrane-bounded periplasmic space"/>
    <property type="evidence" value="ECO:0000314"/>
    <property type="project" value="EcoCyc"/>
</dbReference>
<dbReference type="GO" id="GO:0060241">
    <property type="term" value="F:lysozyme inhibitor activity"/>
    <property type="evidence" value="ECO:0000314"/>
    <property type="project" value="EcoCyc"/>
</dbReference>
<dbReference type="GO" id="GO:0006952">
    <property type="term" value="P:defense response"/>
    <property type="evidence" value="ECO:0000315"/>
    <property type="project" value="EcoCyc"/>
</dbReference>
<dbReference type="FunFam" id="2.60.120.380:FF:000004">
    <property type="entry name" value="Inhibitor of g-type lysozyme"/>
    <property type="match status" value="1"/>
</dbReference>
<dbReference type="Gene3D" id="2.60.120.380">
    <property type="match status" value="1"/>
</dbReference>
<dbReference type="InterPro" id="IPR007280">
    <property type="entry name" value="Peptidase_C_arc/bac"/>
</dbReference>
<dbReference type="Pfam" id="PF04151">
    <property type="entry name" value="PPC"/>
    <property type="match status" value="1"/>
</dbReference>
<proteinExistence type="evidence at protein level"/>
<gene>
    <name type="primary">pliG</name>
    <name type="synonym">ycgK</name>
    <name type="ordered locus">b1178</name>
    <name type="ordered locus">JW1167</name>
</gene>
<evidence type="ECO:0000255" key="1"/>
<evidence type="ECO:0000269" key="2">
    <source>
    </source>
</evidence>
<evidence type="ECO:0007829" key="3">
    <source>
        <dbReference type="PDB" id="4G9S"/>
    </source>
</evidence>
<protein>
    <recommendedName>
        <fullName>Inhibitor of g-type lysozyme</fullName>
    </recommendedName>
</protein>
<feature type="signal peptide" evidence="1">
    <location>
        <begin position="1"/>
        <end position="22"/>
    </location>
</feature>
<feature type="chain" id="PRO_0000013828" description="Inhibitor of g-type lysozyme">
    <location>
        <begin position="23"/>
        <end position="133"/>
    </location>
</feature>
<feature type="strand" evidence="3">
    <location>
        <begin position="26"/>
        <end position="28"/>
    </location>
</feature>
<feature type="strand" evidence="3">
    <location>
        <begin position="36"/>
        <end position="45"/>
    </location>
</feature>
<feature type="strand" evidence="3">
    <location>
        <begin position="50"/>
        <end position="56"/>
    </location>
</feature>
<feature type="strand" evidence="3">
    <location>
        <begin position="61"/>
        <end position="67"/>
    </location>
</feature>
<feature type="strand" evidence="3">
    <location>
        <begin position="72"/>
        <end position="76"/>
    </location>
</feature>
<feature type="strand" evidence="3">
    <location>
        <begin position="102"/>
        <end position="112"/>
    </location>
</feature>
<feature type="helix" evidence="3">
    <location>
        <begin position="115"/>
        <end position="119"/>
    </location>
</feature>
<feature type="strand" evidence="3">
    <location>
        <begin position="123"/>
        <end position="133"/>
    </location>
</feature>
<keyword id="KW-0002">3D-structure</keyword>
<keyword id="KW-0574">Periplasm</keyword>
<keyword id="KW-1185">Reference proteome</keyword>
<keyword id="KW-0732">Signal</keyword>
<sequence length="133" mass="14906">MKIKSIRKAVLLLALLTSTSFAAGKNVNVEFRKGHSSAQYSGEIKGYDYDTYTFYAKKGQKVHVSISNEGADTYLFGPGIDDSVDLSRYSPELDSHGQYSLPASGKYELRVLQTRNDARKNKTKKYNVDIQIK</sequence>
<accession>P76002</accession>
<reference key="1">
    <citation type="journal article" date="1996" name="DNA Res.">
        <title>A 718-kb DNA sequence of the Escherichia coli K-12 genome corresponding to the 12.7-28.0 min region on the linkage map.</title>
        <authorList>
            <person name="Oshima T."/>
            <person name="Aiba H."/>
            <person name="Baba T."/>
            <person name="Fujita K."/>
            <person name="Hayashi K."/>
            <person name="Honjo A."/>
            <person name="Ikemoto K."/>
            <person name="Inada T."/>
            <person name="Itoh T."/>
            <person name="Kajihara M."/>
            <person name="Kanai K."/>
            <person name="Kashimoto K."/>
            <person name="Kimura S."/>
            <person name="Kitagawa M."/>
            <person name="Makino K."/>
            <person name="Masuda S."/>
            <person name="Miki T."/>
            <person name="Mizobuchi K."/>
            <person name="Mori H."/>
            <person name="Motomura K."/>
            <person name="Nakamura Y."/>
            <person name="Nashimoto H."/>
            <person name="Nishio Y."/>
            <person name="Saito N."/>
            <person name="Sampei G."/>
            <person name="Seki Y."/>
            <person name="Tagami H."/>
            <person name="Takemoto K."/>
            <person name="Wada C."/>
            <person name="Yamamoto Y."/>
            <person name="Yano M."/>
            <person name="Horiuchi T."/>
        </authorList>
    </citation>
    <scope>NUCLEOTIDE SEQUENCE [LARGE SCALE GENOMIC DNA]</scope>
    <source>
        <strain>K12 / W3110 / ATCC 27325 / DSM 5911</strain>
    </source>
</reference>
<reference key="2">
    <citation type="journal article" date="1997" name="Science">
        <title>The complete genome sequence of Escherichia coli K-12.</title>
        <authorList>
            <person name="Blattner F.R."/>
            <person name="Plunkett G. III"/>
            <person name="Bloch C.A."/>
            <person name="Perna N.T."/>
            <person name="Burland V."/>
            <person name="Riley M."/>
            <person name="Collado-Vides J."/>
            <person name="Glasner J.D."/>
            <person name="Rode C.K."/>
            <person name="Mayhew G.F."/>
            <person name="Gregor J."/>
            <person name="Davis N.W."/>
            <person name="Kirkpatrick H.A."/>
            <person name="Goeden M.A."/>
            <person name="Rose D.J."/>
            <person name="Mau B."/>
            <person name="Shao Y."/>
        </authorList>
    </citation>
    <scope>NUCLEOTIDE SEQUENCE [LARGE SCALE GENOMIC DNA]</scope>
    <source>
        <strain>K12 / MG1655 / ATCC 47076</strain>
    </source>
</reference>
<reference key="3">
    <citation type="journal article" date="2006" name="Mol. Syst. Biol.">
        <title>Highly accurate genome sequences of Escherichia coli K-12 strains MG1655 and W3110.</title>
        <authorList>
            <person name="Hayashi K."/>
            <person name="Morooka N."/>
            <person name="Yamamoto Y."/>
            <person name="Fujita K."/>
            <person name="Isono K."/>
            <person name="Choi S."/>
            <person name="Ohtsubo E."/>
            <person name="Baba T."/>
            <person name="Wanner B.L."/>
            <person name="Mori H."/>
            <person name="Horiuchi T."/>
        </authorList>
    </citation>
    <scope>NUCLEOTIDE SEQUENCE [LARGE SCALE GENOMIC DNA]</scope>
    <source>
        <strain>K12 / W3110 / ATCC 27325 / DSM 5911</strain>
    </source>
</reference>
<reference key="4">
    <citation type="journal article" date="2011" name="Cell. Mol. Life Sci.">
        <title>Identification of a bacterial inhibitor against g-type lysozyme.</title>
        <authorList>
            <person name="Vanderkelen L."/>
            <person name="Van Herreweghe J.M."/>
            <person name="Vanoirbeek K.G."/>
            <person name="Baggerman G."/>
            <person name="Myrnes B."/>
            <person name="Declerck P.J."/>
            <person name="Nilsen I.W."/>
            <person name="Michiels C.W."/>
            <person name="Callewaert L."/>
        </authorList>
    </citation>
    <scope>FUNCTION</scope>
    <scope>SUBCELLULAR LOCATION</scope>
    <scope>IDENTIFICATION BY MASS SPECTROMETRY</scope>
    <source>
        <strain>K12 / MG1655 / ATCC 47076</strain>
    </source>
</reference>
<name>PLIG_ECOLI</name>
<comment type="function">
    <text evidence="2">Inhibits activity of g-type lysozyme, which confers increased lysozyme tolerance to the bacterium.</text>
</comment>
<comment type="subcellular location">
    <subcellularLocation>
        <location evidence="2">Periplasm</location>
    </subcellularLocation>
</comment>
<organism>
    <name type="scientific">Escherichia coli (strain K12)</name>
    <dbReference type="NCBI Taxonomy" id="83333"/>
    <lineage>
        <taxon>Bacteria</taxon>
        <taxon>Pseudomonadati</taxon>
        <taxon>Pseudomonadota</taxon>
        <taxon>Gammaproteobacteria</taxon>
        <taxon>Enterobacterales</taxon>
        <taxon>Enterobacteriaceae</taxon>
        <taxon>Escherichia</taxon>
    </lineage>
</organism>